<comment type="function">
    <text evidence="1">DNA-binding protein that induces severe bending of DNA. Required for DNA-binding by the FACT complex, a general chromatin factor that acts to reorganize nucleosomes. The FACT complex is involved in multiple processes that require DNA as a template such as mRNA elongation, DNA replication and DNA repair. Also augments the fidelity of transcription by RNA polymerase III independently of any role in the FACT complex (By similarity).</text>
</comment>
<comment type="subunit">
    <text evidence="1">Weakly associates with the stable heterodimer of ctc-1/pob3 and ctc-2/spt16 to form the FACT complex.</text>
</comment>
<comment type="subcellular location">
    <subcellularLocation>
        <location evidence="2">Nucleus</location>
    </subcellularLocation>
    <subcellularLocation>
        <location evidence="1">Chromosome</location>
    </subcellularLocation>
</comment>
<comment type="similarity">
    <text evidence="4">Belongs to the NHP6 family.</text>
</comment>
<name>NHP6_NEUCR</name>
<dbReference type="EMBL" id="CM002236">
    <property type="protein sequence ID" value="ESA43991.1"/>
    <property type="molecule type" value="Genomic_DNA"/>
</dbReference>
<dbReference type="RefSeq" id="XP_011393296.1">
    <property type="nucleotide sequence ID" value="XM_011394994.1"/>
</dbReference>
<dbReference type="SMR" id="Q7S045"/>
<dbReference type="FunCoup" id="Q7S045">
    <property type="interactions" value="403"/>
</dbReference>
<dbReference type="STRING" id="367110.Q7S045"/>
<dbReference type="PaxDb" id="5141-EFNCRP00000009734"/>
<dbReference type="EnsemblFungi" id="ESA43991">
    <property type="protein sequence ID" value="ESA43991"/>
    <property type="gene ID" value="NCU09995"/>
</dbReference>
<dbReference type="GeneID" id="3874053"/>
<dbReference type="KEGG" id="ncr:NCU09995"/>
<dbReference type="VEuPathDB" id="FungiDB:NCU09995"/>
<dbReference type="InParanoid" id="Q7S045"/>
<dbReference type="OrthoDB" id="1919336at2759"/>
<dbReference type="Proteomes" id="UP000001805">
    <property type="component" value="Chromosome 1, Linkage Group I"/>
</dbReference>
<dbReference type="GO" id="GO:0005694">
    <property type="term" value="C:chromosome"/>
    <property type="evidence" value="ECO:0007669"/>
    <property type="project" value="UniProtKB-SubCell"/>
</dbReference>
<dbReference type="GO" id="GO:0005634">
    <property type="term" value="C:nucleus"/>
    <property type="evidence" value="ECO:0007669"/>
    <property type="project" value="UniProtKB-SubCell"/>
</dbReference>
<dbReference type="GO" id="GO:0003677">
    <property type="term" value="F:DNA binding"/>
    <property type="evidence" value="ECO:0007669"/>
    <property type="project" value="UniProtKB-KW"/>
</dbReference>
<dbReference type="GO" id="GO:0006281">
    <property type="term" value="P:DNA repair"/>
    <property type="evidence" value="ECO:0007669"/>
    <property type="project" value="UniProtKB-KW"/>
</dbReference>
<dbReference type="CDD" id="cd01390">
    <property type="entry name" value="HMG-box_NHP6-like"/>
    <property type="match status" value="1"/>
</dbReference>
<dbReference type="FunFam" id="1.10.30.10:FF:000016">
    <property type="entry name" value="FACT complex subunit SSRP1"/>
    <property type="match status" value="1"/>
</dbReference>
<dbReference type="Gene3D" id="1.10.30.10">
    <property type="entry name" value="High mobility group box domain"/>
    <property type="match status" value="1"/>
</dbReference>
<dbReference type="InterPro" id="IPR009071">
    <property type="entry name" value="HMG_box_dom"/>
</dbReference>
<dbReference type="InterPro" id="IPR036910">
    <property type="entry name" value="HMG_box_dom_sf"/>
</dbReference>
<dbReference type="InterPro" id="IPR050342">
    <property type="entry name" value="HMGB"/>
</dbReference>
<dbReference type="PANTHER" id="PTHR48112">
    <property type="entry name" value="HIGH MOBILITY GROUP PROTEIN DSP1"/>
    <property type="match status" value="1"/>
</dbReference>
<dbReference type="PANTHER" id="PTHR48112:SF22">
    <property type="entry name" value="MITOCHONDRIAL TRANSCRIPTION FACTOR A, ISOFORM B"/>
    <property type="match status" value="1"/>
</dbReference>
<dbReference type="Pfam" id="PF00505">
    <property type="entry name" value="HMG_box"/>
    <property type="match status" value="1"/>
</dbReference>
<dbReference type="PRINTS" id="PR00886">
    <property type="entry name" value="HIGHMOBLTY12"/>
</dbReference>
<dbReference type="SMART" id="SM00398">
    <property type="entry name" value="HMG"/>
    <property type="match status" value="1"/>
</dbReference>
<dbReference type="SUPFAM" id="SSF47095">
    <property type="entry name" value="HMG-box"/>
    <property type="match status" value="1"/>
</dbReference>
<dbReference type="PROSITE" id="PS50118">
    <property type="entry name" value="HMG_BOX_2"/>
    <property type="match status" value="1"/>
</dbReference>
<sequence>MPKAAAKSKTTGKVEKRRAKKDPNAPKRGLSAYMFFANEQRENVREENPGVSFGQVGKILGERWKALSDKQRAPYEAKAAADKKRYEDEKQAYNAEADEEESS</sequence>
<evidence type="ECO:0000250" key="1"/>
<evidence type="ECO:0000255" key="2">
    <source>
        <dbReference type="PROSITE-ProRule" id="PRU00267"/>
    </source>
</evidence>
<evidence type="ECO:0000256" key="3">
    <source>
        <dbReference type="SAM" id="MobiDB-lite"/>
    </source>
</evidence>
<evidence type="ECO:0000305" key="4"/>
<organism>
    <name type="scientific">Neurospora crassa (strain ATCC 24698 / 74-OR23-1A / CBS 708.71 / DSM 1257 / FGSC 987)</name>
    <dbReference type="NCBI Taxonomy" id="367110"/>
    <lineage>
        <taxon>Eukaryota</taxon>
        <taxon>Fungi</taxon>
        <taxon>Dikarya</taxon>
        <taxon>Ascomycota</taxon>
        <taxon>Pezizomycotina</taxon>
        <taxon>Sordariomycetes</taxon>
        <taxon>Sordariomycetidae</taxon>
        <taxon>Sordariales</taxon>
        <taxon>Sordariaceae</taxon>
        <taxon>Neurospora</taxon>
    </lineage>
</organism>
<proteinExistence type="inferred from homology"/>
<reference key="1">
    <citation type="journal article" date="2003" name="Nature">
        <title>The genome sequence of the filamentous fungus Neurospora crassa.</title>
        <authorList>
            <person name="Galagan J.E."/>
            <person name="Calvo S.E."/>
            <person name="Borkovich K.A."/>
            <person name="Selker E.U."/>
            <person name="Read N.D."/>
            <person name="Jaffe D.B."/>
            <person name="FitzHugh W."/>
            <person name="Ma L.-J."/>
            <person name="Smirnov S."/>
            <person name="Purcell S."/>
            <person name="Rehman B."/>
            <person name="Elkins T."/>
            <person name="Engels R."/>
            <person name="Wang S."/>
            <person name="Nielsen C.B."/>
            <person name="Butler J."/>
            <person name="Endrizzi M."/>
            <person name="Qui D."/>
            <person name="Ianakiev P."/>
            <person name="Bell-Pedersen D."/>
            <person name="Nelson M.A."/>
            <person name="Werner-Washburne M."/>
            <person name="Selitrennikoff C.P."/>
            <person name="Kinsey J.A."/>
            <person name="Braun E.L."/>
            <person name="Zelter A."/>
            <person name="Schulte U."/>
            <person name="Kothe G.O."/>
            <person name="Jedd G."/>
            <person name="Mewes H.-W."/>
            <person name="Staben C."/>
            <person name="Marcotte E."/>
            <person name="Greenberg D."/>
            <person name="Roy A."/>
            <person name="Foley K."/>
            <person name="Naylor J."/>
            <person name="Stange-Thomann N."/>
            <person name="Barrett R."/>
            <person name="Gnerre S."/>
            <person name="Kamal M."/>
            <person name="Kamvysselis M."/>
            <person name="Mauceli E.W."/>
            <person name="Bielke C."/>
            <person name="Rudd S."/>
            <person name="Frishman D."/>
            <person name="Krystofova S."/>
            <person name="Rasmussen C."/>
            <person name="Metzenberg R.L."/>
            <person name="Perkins D.D."/>
            <person name="Kroken S."/>
            <person name="Cogoni C."/>
            <person name="Macino G."/>
            <person name="Catcheside D.E.A."/>
            <person name="Li W."/>
            <person name="Pratt R.J."/>
            <person name="Osmani S.A."/>
            <person name="DeSouza C.P.C."/>
            <person name="Glass N.L."/>
            <person name="Orbach M.J."/>
            <person name="Berglund J.A."/>
            <person name="Voelker R."/>
            <person name="Yarden O."/>
            <person name="Plamann M."/>
            <person name="Seiler S."/>
            <person name="Dunlap J.C."/>
            <person name="Radford A."/>
            <person name="Aramayo R."/>
            <person name="Natvig D.O."/>
            <person name="Alex L.A."/>
            <person name="Mannhaupt G."/>
            <person name="Ebbole D.J."/>
            <person name="Freitag M."/>
            <person name="Paulsen I."/>
            <person name="Sachs M.S."/>
            <person name="Lander E.S."/>
            <person name="Nusbaum C."/>
            <person name="Birren B.W."/>
        </authorList>
    </citation>
    <scope>NUCLEOTIDE SEQUENCE [LARGE SCALE GENOMIC DNA]</scope>
    <source>
        <strain>ATCC 24698 / 74-OR23-1A / CBS 708.71 / DSM 1257 / FGSC 987</strain>
    </source>
</reference>
<protein>
    <recommendedName>
        <fullName>Non-histone chromosomal protein 6</fullName>
    </recommendedName>
</protein>
<accession>Q7S045</accession>
<accession>V5IRJ4</accession>
<feature type="chain" id="PRO_0000245221" description="Non-histone chromosomal protein 6">
    <location>
        <begin position="1"/>
        <end position="103"/>
    </location>
</feature>
<feature type="DNA-binding region" description="HMG box" evidence="2">
    <location>
        <begin position="26"/>
        <end position="94"/>
    </location>
</feature>
<feature type="region of interest" description="Disordered" evidence="3">
    <location>
        <begin position="1"/>
        <end position="30"/>
    </location>
</feature>
<feature type="region of interest" description="Disordered" evidence="3">
    <location>
        <begin position="70"/>
        <end position="103"/>
    </location>
</feature>
<feature type="compositionally biased region" description="Basic and acidic residues" evidence="3">
    <location>
        <begin position="70"/>
        <end position="91"/>
    </location>
</feature>
<keyword id="KW-0158">Chromosome</keyword>
<keyword id="KW-0227">DNA damage</keyword>
<keyword id="KW-0234">DNA repair</keyword>
<keyword id="KW-0238">DNA-binding</keyword>
<keyword id="KW-0539">Nucleus</keyword>
<keyword id="KW-1185">Reference proteome</keyword>
<keyword id="KW-0804">Transcription</keyword>
<keyword id="KW-0805">Transcription regulation</keyword>
<gene>
    <name type="primary">nhp-1</name>
    <name type="synonym">nhp6</name>
    <name type="ORF">NCU09995</name>
</gene>